<accession>B9KHK9</accession>
<comment type="function">
    <text evidence="1">One of the proteins required for the normal export of preproteins out of the cell cytoplasm. It is a molecular chaperone that binds to a subset of precursor proteins, maintaining them in a translocation-competent state. It also specifically binds to its receptor SecA.</text>
</comment>
<comment type="subunit">
    <text evidence="1">Homotetramer, a dimer of dimers. One homotetramer interacts with 1 SecA dimer.</text>
</comment>
<comment type="subcellular location">
    <subcellularLocation>
        <location evidence="1">Cytoplasm</location>
    </subcellularLocation>
</comment>
<comment type="similarity">
    <text evidence="1">Belongs to the SecB family.</text>
</comment>
<name>SECB_ANAMF</name>
<proteinExistence type="inferred from homology"/>
<gene>
    <name evidence="1" type="primary">secB</name>
    <name type="ordered locus">AMF_081</name>
</gene>
<protein>
    <recommendedName>
        <fullName evidence="1">Protein-export protein SecB</fullName>
    </recommendedName>
</protein>
<keyword id="KW-0143">Chaperone</keyword>
<keyword id="KW-0963">Cytoplasm</keyword>
<keyword id="KW-0653">Protein transport</keyword>
<keyword id="KW-1185">Reference proteome</keyword>
<keyword id="KW-0811">Translocation</keyword>
<keyword id="KW-0813">Transport</keyword>
<dbReference type="EMBL" id="CP001079">
    <property type="protein sequence ID" value="ACM48971.1"/>
    <property type="molecule type" value="Genomic_DNA"/>
</dbReference>
<dbReference type="SMR" id="B9KHK9"/>
<dbReference type="STRING" id="320483.AMF_081"/>
<dbReference type="KEGG" id="amf:AMF_081"/>
<dbReference type="eggNOG" id="COG1952">
    <property type="taxonomic scope" value="Bacteria"/>
</dbReference>
<dbReference type="HOGENOM" id="CLU_111574_0_0_5"/>
<dbReference type="Proteomes" id="UP000007307">
    <property type="component" value="Chromosome"/>
</dbReference>
<dbReference type="GO" id="GO:0005737">
    <property type="term" value="C:cytoplasm"/>
    <property type="evidence" value="ECO:0007669"/>
    <property type="project" value="UniProtKB-SubCell"/>
</dbReference>
<dbReference type="GO" id="GO:0051082">
    <property type="term" value="F:unfolded protein binding"/>
    <property type="evidence" value="ECO:0007669"/>
    <property type="project" value="InterPro"/>
</dbReference>
<dbReference type="GO" id="GO:0006457">
    <property type="term" value="P:protein folding"/>
    <property type="evidence" value="ECO:0007669"/>
    <property type="project" value="UniProtKB-UniRule"/>
</dbReference>
<dbReference type="GO" id="GO:0051262">
    <property type="term" value="P:protein tetramerization"/>
    <property type="evidence" value="ECO:0007669"/>
    <property type="project" value="InterPro"/>
</dbReference>
<dbReference type="GO" id="GO:0015031">
    <property type="term" value="P:protein transport"/>
    <property type="evidence" value="ECO:0007669"/>
    <property type="project" value="UniProtKB-UniRule"/>
</dbReference>
<dbReference type="Gene3D" id="3.10.420.10">
    <property type="entry name" value="SecB-like"/>
    <property type="match status" value="1"/>
</dbReference>
<dbReference type="HAMAP" id="MF_00821">
    <property type="entry name" value="SecB"/>
    <property type="match status" value="1"/>
</dbReference>
<dbReference type="InterPro" id="IPR003708">
    <property type="entry name" value="SecB"/>
</dbReference>
<dbReference type="InterPro" id="IPR035958">
    <property type="entry name" value="SecB-like_sf"/>
</dbReference>
<dbReference type="NCBIfam" id="NF004392">
    <property type="entry name" value="PRK05751.1-3"/>
    <property type="match status" value="1"/>
</dbReference>
<dbReference type="NCBIfam" id="TIGR00809">
    <property type="entry name" value="secB"/>
    <property type="match status" value="1"/>
</dbReference>
<dbReference type="PANTHER" id="PTHR36918">
    <property type="match status" value="1"/>
</dbReference>
<dbReference type="PANTHER" id="PTHR36918:SF1">
    <property type="entry name" value="PROTEIN-EXPORT PROTEIN SECB"/>
    <property type="match status" value="1"/>
</dbReference>
<dbReference type="Pfam" id="PF02556">
    <property type="entry name" value="SecB"/>
    <property type="match status" value="1"/>
</dbReference>
<dbReference type="SUPFAM" id="SSF54611">
    <property type="entry name" value="SecB-like"/>
    <property type="match status" value="1"/>
</dbReference>
<feature type="chain" id="PRO_1000148694" description="Protein-export protein SecB">
    <location>
        <begin position="1"/>
        <end position="175"/>
    </location>
</feature>
<sequence length="175" mass="18992">MRYCRLGVSSMRPKLKVRGQYIKDLSFENPNSPKVFLMISKSPPEISISVNVSSASLPVKPTEGEQAAADLYEVTLQVNIESVVEKVPAFLCELKYCGVFSLEEKAEEQVVKEALLITAPGVLFPFVREVIAKMTASAGFPPLMLDVIDFEAMYASQLGGDDGKNKQANKSGGAA</sequence>
<reference key="1">
    <citation type="journal article" date="2009" name="BMC Genomics">
        <title>Conservation in the face of diversity: multistrain analysis of an intracellular bacterium.</title>
        <authorList>
            <person name="Dark M.J."/>
            <person name="Herndon D.R."/>
            <person name="Kappmeyer L.S."/>
            <person name="Gonzales M.P."/>
            <person name="Nordeen E."/>
            <person name="Palmer G.H."/>
            <person name="Knowles D.P. Jr."/>
            <person name="Brayton K.A."/>
        </authorList>
    </citation>
    <scope>NUCLEOTIDE SEQUENCE [LARGE SCALE GENOMIC DNA]</scope>
    <source>
        <strain>Florida</strain>
    </source>
</reference>
<evidence type="ECO:0000255" key="1">
    <source>
        <dbReference type="HAMAP-Rule" id="MF_00821"/>
    </source>
</evidence>
<organism>
    <name type="scientific">Anaplasma marginale (strain Florida)</name>
    <dbReference type="NCBI Taxonomy" id="320483"/>
    <lineage>
        <taxon>Bacteria</taxon>
        <taxon>Pseudomonadati</taxon>
        <taxon>Pseudomonadota</taxon>
        <taxon>Alphaproteobacteria</taxon>
        <taxon>Rickettsiales</taxon>
        <taxon>Anaplasmataceae</taxon>
        <taxon>Anaplasma</taxon>
    </lineage>
</organism>